<accession>A9WCD8</accession>
<sequence>MTELHHLTVTAAQAALAAGDITAVELTEACLARINATEPTIRAFLHLTPDAALAAARAADERRQQGRSLGPLDGIPIAIKDVICTDGVPTTAGSRILAGFRPPYNATVIERLVAAGAVLVGKLNCDEFAMGSSTENSAYQITTNPWDPTRVPGGSSGGSAAAVAAGQVPATLGTDTGGSIRQPAALCGISGLKPTYGRVSRYGLIAYGSSLDQIGPMAWTVADLAVLLNVIAGHDPRDGTSAPIDTPDYTTALTGDIRGLRIGIPREYFVEGMEPGVESATRTAIEVLRDLGAILVDVSLPHTRYALPTYYIIAPAEASANLARFDGVRYGFRAEGETMWEQIEQTRGQGFGPEVRRRIMLGTYALSAGYYDAYYRRAQQVRTLIKRDFEQVFTQVDLLAAPTSPTVAFPIGQKINDPLAMYLSDVCTLPINLAGVPALVVPCGFSEGLPVGLQLIGRPFDEATLLRVGDAYQRLTEWHTQRPRLVV</sequence>
<organism>
    <name type="scientific">Chloroflexus aurantiacus (strain ATCC 29366 / DSM 635 / J-10-fl)</name>
    <dbReference type="NCBI Taxonomy" id="324602"/>
    <lineage>
        <taxon>Bacteria</taxon>
        <taxon>Bacillati</taxon>
        <taxon>Chloroflexota</taxon>
        <taxon>Chloroflexia</taxon>
        <taxon>Chloroflexales</taxon>
        <taxon>Chloroflexineae</taxon>
        <taxon>Chloroflexaceae</taxon>
        <taxon>Chloroflexus</taxon>
    </lineage>
</organism>
<feature type="chain" id="PRO_1000203026" description="Glutamyl-tRNA(Gln) amidotransferase subunit A">
    <location>
        <begin position="1"/>
        <end position="487"/>
    </location>
</feature>
<feature type="active site" description="Charge relay system" evidence="1">
    <location>
        <position position="80"/>
    </location>
</feature>
<feature type="active site" description="Charge relay system" evidence="1">
    <location>
        <position position="155"/>
    </location>
</feature>
<feature type="active site" description="Acyl-ester intermediate" evidence="1">
    <location>
        <position position="179"/>
    </location>
</feature>
<gene>
    <name evidence="1" type="primary">gatA</name>
    <name type="ordered locus">Caur_1712</name>
</gene>
<evidence type="ECO:0000255" key="1">
    <source>
        <dbReference type="HAMAP-Rule" id="MF_00120"/>
    </source>
</evidence>
<dbReference type="EC" id="6.3.5.7" evidence="1"/>
<dbReference type="EMBL" id="CP000909">
    <property type="protein sequence ID" value="ABY34929.1"/>
    <property type="molecule type" value="Genomic_DNA"/>
</dbReference>
<dbReference type="RefSeq" id="WP_012257583.1">
    <property type="nucleotide sequence ID" value="NC_010175.1"/>
</dbReference>
<dbReference type="RefSeq" id="YP_001635318.1">
    <property type="nucleotide sequence ID" value="NC_010175.1"/>
</dbReference>
<dbReference type="SMR" id="A9WCD8"/>
<dbReference type="FunCoup" id="A9WCD8">
    <property type="interactions" value="476"/>
</dbReference>
<dbReference type="STRING" id="324602.Caur_1712"/>
<dbReference type="EnsemblBacteria" id="ABY34929">
    <property type="protein sequence ID" value="ABY34929"/>
    <property type="gene ID" value="Caur_1712"/>
</dbReference>
<dbReference type="KEGG" id="cau:Caur_1712"/>
<dbReference type="PATRIC" id="fig|324602.8.peg.1952"/>
<dbReference type="eggNOG" id="COG0154">
    <property type="taxonomic scope" value="Bacteria"/>
</dbReference>
<dbReference type="HOGENOM" id="CLU_009600_0_3_0"/>
<dbReference type="InParanoid" id="A9WCD8"/>
<dbReference type="Proteomes" id="UP000002008">
    <property type="component" value="Chromosome"/>
</dbReference>
<dbReference type="GO" id="GO:0030956">
    <property type="term" value="C:glutamyl-tRNA(Gln) amidotransferase complex"/>
    <property type="evidence" value="ECO:0007669"/>
    <property type="project" value="InterPro"/>
</dbReference>
<dbReference type="GO" id="GO:0005524">
    <property type="term" value="F:ATP binding"/>
    <property type="evidence" value="ECO:0007669"/>
    <property type="project" value="UniProtKB-KW"/>
</dbReference>
<dbReference type="GO" id="GO:0050567">
    <property type="term" value="F:glutaminyl-tRNA synthase (glutamine-hydrolyzing) activity"/>
    <property type="evidence" value="ECO:0007669"/>
    <property type="project" value="UniProtKB-UniRule"/>
</dbReference>
<dbReference type="GO" id="GO:0006412">
    <property type="term" value="P:translation"/>
    <property type="evidence" value="ECO:0007669"/>
    <property type="project" value="UniProtKB-UniRule"/>
</dbReference>
<dbReference type="Gene3D" id="3.90.1300.10">
    <property type="entry name" value="Amidase signature (AS) domain"/>
    <property type="match status" value="1"/>
</dbReference>
<dbReference type="HAMAP" id="MF_00120">
    <property type="entry name" value="GatA"/>
    <property type="match status" value="1"/>
</dbReference>
<dbReference type="InterPro" id="IPR000120">
    <property type="entry name" value="Amidase"/>
</dbReference>
<dbReference type="InterPro" id="IPR020556">
    <property type="entry name" value="Amidase_CS"/>
</dbReference>
<dbReference type="InterPro" id="IPR023631">
    <property type="entry name" value="Amidase_dom"/>
</dbReference>
<dbReference type="InterPro" id="IPR036928">
    <property type="entry name" value="AS_sf"/>
</dbReference>
<dbReference type="InterPro" id="IPR004412">
    <property type="entry name" value="GatA"/>
</dbReference>
<dbReference type="NCBIfam" id="TIGR00132">
    <property type="entry name" value="gatA"/>
    <property type="match status" value="1"/>
</dbReference>
<dbReference type="PANTHER" id="PTHR11895:SF151">
    <property type="entry name" value="GLUTAMYL-TRNA(GLN) AMIDOTRANSFERASE SUBUNIT A"/>
    <property type="match status" value="1"/>
</dbReference>
<dbReference type="PANTHER" id="PTHR11895">
    <property type="entry name" value="TRANSAMIDASE"/>
    <property type="match status" value="1"/>
</dbReference>
<dbReference type="Pfam" id="PF01425">
    <property type="entry name" value="Amidase"/>
    <property type="match status" value="1"/>
</dbReference>
<dbReference type="PIRSF" id="PIRSF001221">
    <property type="entry name" value="Amidase_fungi"/>
    <property type="match status" value="1"/>
</dbReference>
<dbReference type="SUPFAM" id="SSF75304">
    <property type="entry name" value="Amidase signature (AS) enzymes"/>
    <property type="match status" value="1"/>
</dbReference>
<dbReference type="PROSITE" id="PS00571">
    <property type="entry name" value="AMIDASES"/>
    <property type="match status" value="1"/>
</dbReference>
<keyword id="KW-0067">ATP-binding</keyword>
<keyword id="KW-0436">Ligase</keyword>
<keyword id="KW-0547">Nucleotide-binding</keyword>
<keyword id="KW-0648">Protein biosynthesis</keyword>
<keyword id="KW-1185">Reference proteome</keyword>
<reference key="1">
    <citation type="journal article" date="2011" name="BMC Genomics">
        <title>Complete genome sequence of the filamentous anoxygenic phototrophic bacterium Chloroflexus aurantiacus.</title>
        <authorList>
            <person name="Tang K.H."/>
            <person name="Barry K."/>
            <person name="Chertkov O."/>
            <person name="Dalin E."/>
            <person name="Han C.S."/>
            <person name="Hauser L.J."/>
            <person name="Honchak B.M."/>
            <person name="Karbach L.E."/>
            <person name="Land M.L."/>
            <person name="Lapidus A."/>
            <person name="Larimer F.W."/>
            <person name="Mikhailova N."/>
            <person name="Pitluck S."/>
            <person name="Pierson B.K."/>
            <person name="Blankenship R.E."/>
        </authorList>
    </citation>
    <scope>NUCLEOTIDE SEQUENCE [LARGE SCALE GENOMIC DNA]</scope>
    <source>
        <strain>ATCC 29366 / DSM 635 / J-10-fl</strain>
    </source>
</reference>
<proteinExistence type="inferred from homology"/>
<protein>
    <recommendedName>
        <fullName evidence="1">Glutamyl-tRNA(Gln) amidotransferase subunit A</fullName>
        <shortName evidence="1">Glu-ADT subunit A</shortName>
        <ecNumber evidence="1">6.3.5.7</ecNumber>
    </recommendedName>
</protein>
<comment type="function">
    <text evidence="1">Allows the formation of correctly charged Gln-tRNA(Gln) through the transamidation of misacylated Glu-tRNA(Gln) in organisms which lack glutaminyl-tRNA synthetase. The reaction takes place in the presence of glutamine and ATP through an activated gamma-phospho-Glu-tRNA(Gln).</text>
</comment>
<comment type="catalytic activity">
    <reaction evidence="1">
        <text>L-glutamyl-tRNA(Gln) + L-glutamine + ATP + H2O = L-glutaminyl-tRNA(Gln) + L-glutamate + ADP + phosphate + H(+)</text>
        <dbReference type="Rhea" id="RHEA:17521"/>
        <dbReference type="Rhea" id="RHEA-COMP:9681"/>
        <dbReference type="Rhea" id="RHEA-COMP:9684"/>
        <dbReference type="ChEBI" id="CHEBI:15377"/>
        <dbReference type="ChEBI" id="CHEBI:15378"/>
        <dbReference type="ChEBI" id="CHEBI:29985"/>
        <dbReference type="ChEBI" id="CHEBI:30616"/>
        <dbReference type="ChEBI" id="CHEBI:43474"/>
        <dbReference type="ChEBI" id="CHEBI:58359"/>
        <dbReference type="ChEBI" id="CHEBI:78520"/>
        <dbReference type="ChEBI" id="CHEBI:78521"/>
        <dbReference type="ChEBI" id="CHEBI:456216"/>
        <dbReference type="EC" id="6.3.5.7"/>
    </reaction>
</comment>
<comment type="subunit">
    <text evidence="1">Heterotrimer of A, B and C subunits.</text>
</comment>
<comment type="similarity">
    <text evidence="1">Belongs to the amidase family. GatA subfamily.</text>
</comment>
<name>GATA_CHLAA</name>